<name>MSRB_LACPL</name>
<sequence>MDKQQGELRQRLTPEQYAVTQEAATERPFSGEYDNFYQEGIYVDVVSGQALFSSRDKYDAGCGWPSFTKPIDQTNLNEHRDESFGMHRTEVTSTQANSHLGHVFPDGPRDRGGLRYCINSAALKFIPVADLEKAGYGQYQSLFK</sequence>
<organism>
    <name type="scientific">Lactiplantibacillus plantarum (strain ATCC BAA-793 / NCIMB 8826 / WCFS1)</name>
    <name type="common">Lactobacillus plantarum</name>
    <dbReference type="NCBI Taxonomy" id="220668"/>
    <lineage>
        <taxon>Bacteria</taxon>
        <taxon>Bacillati</taxon>
        <taxon>Bacillota</taxon>
        <taxon>Bacilli</taxon>
        <taxon>Lactobacillales</taxon>
        <taxon>Lactobacillaceae</taxon>
        <taxon>Lactiplantibacillus</taxon>
    </lineage>
</organism>
<protein>
    <recommendedName>
        <fullName evidence="1">Peptide methionine sulfoxide reductase MsrB</fullName>
        <ecNumber evidence="1">1.8.4.12</ecNumber>
    </recommendedName>
    <alternativeName>
        <fullName evidence="1">Peptide-methionine (R)-S-oxide reductase</fullName>
    </alternativeName>
</protein>
<keyword id="KW-0560">Oxidoreductase</keyword>
<keyword id="KW-1185">Reference proteome</keyword>
<evidence type="ECO:0000255" key="1">
    <source>
        <dbReference type="HAMAP-Rule" id="MF_01400"/>
    </source>
</evidence>
<evidence type="ECO:0000255" key="2">
    <source>
        <dbReference type="PROSITE-ProRule" id="PRU01126"/>
    </source>
</evidence>
<evidence type="ECO:0000256" key="3">
    <source>
        <dbReference type="SAM" id="MobiDB-lite"/>
    </source>
</evidence>
<feature type="chain" id="PRO_0000140277" description="Peptide methionine sulfoxide reductase MsrB">
    <location>
        <begin position="1"/>
        <end position="144"/>
    </location>
</feature>
<feature type="domain" description="MsrB" evidence="2">
    <location>
        <begin position="5"/>
        <end position="128"/>
    </location>
</feature>
<feature type="region of interest" description="Disordered" evidence="3">
    <location>
        <begin position="1"/>
        <end position="25"/>
    </location>
</feature>
<feature type="compositionally biased region" description="Basic and acidic residues" evidence="3">
    <location>
        <begin position="1"/>
        <end position="12"/>
    </location>
</feature>
<feature type="active site" description="Nucleophile" evidence="2">
    <location>
        <position position="117"/>
    </location>
</feature>
<gene>
    <name evidence="1" type="primary">msrB</name>
    <name type="synonym">msrA3</name>
    <name type="ordered locus">lp_1836</name>
</gene>
<proteinExistence type="inferred from homology"/>
<comment type="catalytic activity">
    <reaction evidence="1">
        <text>L-methionyl-[protein] + [thioredoxin]-disulfide + H2O = L-methionyl-(R)-S-oxide-[protein] + [thioredoxin]-dithiol</text>
        <dbReference type="Rhea" id="RHEA:24164"/>
        <dbReference type="Rhea" id="RHEA-COMP:10698"/>
        <dbReference type="Rhea" id="RHEA-COMP:10700"/>
        <dbReference type="Rhea" id="RHEA-COMP:12313"/>
        <dbReference type="Rhea" id="RHEA-COMP:12314"/>
        <dbReference type="ChEBI" id="CHEBI:15377"/>
        <dbReference type="ChEBI" id="CHEBI:16044"/>
        <dbReference type="ChEBI" id="CHEBI:29950"/>
        <dbReference type="ChEBI" id="CHEBI:45764"/>
        <dbReference type="ChEBI" id="CHEBI:50058"/>
        <dbReference type="EC" id="1.8.4.12"/>
    </reaction>
</comment>
<comment type="similarity">
    <text evidence="1">Belongs to the MsrB Met sulfoxide reductase family.</text>
</comment>
<accession>Q88W33</accession>
<accession>F9UPH2</accession>
<reference key="1">
    <citation type="journal article" date="2003" name="Proc. Natl. Acad. Sci. U.S.A.">
        <title>Complete genome sequence of Lactobacillus plantarum WCFS1.</title>
        <authorList>
            <person name="Kleerebezem M."/>
            <person name="Boekhorst J."/>
            <person name="van Kranenburg R."/>
            <person name="Molenaar D."/>
            <person name="Kuipers O.P."/>
            <person name="Leer R."/>
            <person name="Tarchini R."/>
            <person name="Peters S.A."/>
            <person name="Sandbrink H.M."/>
            <person name="Fiers M.W.E.J."/>
            <person name="Stiekema W."/>
            <person name="Klein Lankhorst R.M."/>
            <person name="Bron P.A."/>
            <person name="Hoffer S.M."/>
            <person name="Nierop Groot M.N."/>
            <person name="Kerkhoven R."/>
            <person name="De Vries M."/>
            <person name="Ursing B."/>
            <person name="De Vos W.M."/>
            <person name="Siezen R.J."/>
        </authorList>
    </citation>
    <scope>NUCLEOTIDE SEQUENCE [LARGE SCALE GENOMIC DNA]</scope>
    <source>
        <strain>ATCC BAA-793 / NCIMB 8826 / WCFS1</strain>
    </source>
</reference>
<reference key="2">
    <citation type="journal article" date="2012" name="J. Bacteriol.">
        <title>Complete resequencing and reannotation of the Lactobacillus plantarum WCFS1 genome.</title>
        <authorList>
            <person name="Siezen R.J."/>
            <person name="Francke C."/>
            <person name="Renckens B."/>
            <person name="Boekhorst J."/>
            <person name="Wels M."/>
            <person name="Kleerebezem M."/>
            <person name="van Hijum S.A."/>
        </authorList>
    </citation>
    <scope>NUCLEOTIDE SEQUENCE [LARGE SCALE GENOMIC DNA]</scope>
    <scope>GENOME REANNOTATION</scope>
    <source>
        <strain>ATCC BAA-793 / NCIMB 8826 / WCFS1</strain>
    </source>
</reference>
<dbReference type="EC" id="1.8.4.12" evidence="1"/>
<dbReference type="EMBL" id="AL935263">
    <property type="protein sequence ID" value="CCC79111.1"/>
    <property type="molecule type" value="Genomic_DNA"/>
</dbReference>
<dbReference type="RefSeq" id="WP_003644417.1">
    <property type="nucleotide sequence ID" value="NC_004567.2"/>
</dbReference>
<dbReference type="RefSeq" id="YP_004889625.1">
    <property type="nucleotide sequence ID" value="NC_004567.2"/>
</dbReference>
<dbReference type="SMR" id="Q88W33"/>
<dbReference type="STRING" id="220668.lp_1836"/>
<dbReference type="EnsemblBacteria" id="CCC79111">
    <property type="protein sequence ID" value="CCC79111"/>
    <property type="gene ID" value="lp_1836"/>
</dbReference>
<dbReference type="GeneID" id="77218206"/>
<dbReference type="KEGG" id="lpl:lp_1836"/>
<dbReference type="PATRIC" id="fig|220668.9.peg.1548"/>
<dbReference type="eggNOG" id="COG0229">
    <property type="taxonomic scope" value="Bacteria"/>
</dbReference>
<dbReference type="HOGENOM" id="CLU_031040_8_5_9"/>
<dbReference type="OrthoDB" id="4174719at2"/>
<dbReference type="PhylomeDB" id="Q88W33"/>
<dbReference type="Proteomes" id="UP000000432">
    <property type="component" value="Chromosome"/>
</dbReference>
<dbReference type="GO" id="GO:0005737">
    <property type="term" value="C:cytoplasm"/>
    <property type="evidence" value="ECO:0007669"/>
    <property type="project" value="TreeGrafter"/>
</dbReference>
<dbReference type="GO" id="GO:0033743">
    <property type="term" value="F:peptide-methionine (R)-S-oxide reductase activity"/>
    <property type="evidence" value="ECO:0007669"/>
    <property type="project" value="UniProtKB-UniRule"/>
</dbReference>
<dbReference type="GO" id="GO:0030091">
    <property type="term" value="P:protein repair"/>
    <property type="evidence" value="ECO:0007669"/>
    <property type="project" value="InterPro"/>
</dbReference>
<dbReference type="GO" id="GO:0006979">
    <property type="term" value="P:response to oxidative stress"/>
    <property type="evidence" value="ECO:0007669"/>
    <property type="project" value="InterPro"/>
</dbReference>
<dbReference type="FunFam" id="2.170.150.20:FF:000003">
    <property type="entry name" value="Peptide methionine sulfoxide reductase MsrB"/>
    <property type="match status" value="1"/>
</dbReference>
<dbReference type="Gene3D" id="2.170.150.20">
    <property type="entry name" value="Peptide methionine sulfoxide reductase"/>
    <property type="match status" value="1"/>
</dbReference>
<dbReference type="HAMAP" id="MF_01400">
    <property type="entry name" value="MsrB"/>
    <property type="match status" value="1"/>
</dbReference>
<dbReference type="InterPro" id="IPR028427">
    <property type="entry name" value="Met_Sox_Rdtase_MsrB"/>
</dbReference>
<dbReference type="InterPro" id="IPR002579">
    <property type="entry name" value="Met_Sox_Rdtase_MsrB_dom"/>
</dbReference>
<dbReference type="InterPro" id="IPR011057">
    <property type="entry name" value="Mss4-like_sf"/>
</dbReference>
<dbReference type="NCBIfam" id="TIGR00357">
    <property type="entry name" value="peptide-methionine (R)-S-oxide reductase MsrB"/>
    <property type="match status" value="1"/>
</dbReference>
<dbReference type="PANTHER" id="PTHR10173">
    <property type="entry name" value="METHIONINE SULFOXIDE REDUCTASE"/>
    <property type="match status" value="1"/>
</dbReference>
<dbReference type="PANTHER" id="PTHR10173:SF59">
    <property type="entry name" value="PEPTIDE METHIONINE SULFOXIDE REDUCTASE MSRA_MSRB"/>
    <property type="match status" value="1"/>
</dbReference>
<dbReference type="Pfam" id="PF01641">
    <property type="entry name" value="SelR"/>
    <property type="match status" value="1"/>
</dbReference>
<dbReference type="SUPFAM" id="SSF51316">
    <property type="entry name" value="Mss4-like"/>
    <property type="match status" value="1"/>
</dbReference>
<dbReference type="PROSITE" id="PS51790">
    <property type="entry name" value="MSRB"/>
    <property type="match status" value="1"/>
</dbReference>